<comment type="function">
    <text evidence="1">A GTPase-activating protein (GAP) that modifies Der/EngA GTPase function. May play a role in ribosome biogenesis.</text>
</comment>
<comment type="subunit">
    <text evidence="1">Interacts with Der.</text>
</comment>
<comment type="similarity">
    <text evidence="1">Belongs to the YihI family.</text>
</comment>
<feature type="chain" id="PRO_0000209590" description="Der GTPase-activating protein YihI">
    <location>
        <begin position="1"/>
        <end position="180"/>
    </location>
</feature>
<feature type="region of interest" description="Disordered" evidence="2">
    <location>
        <begin position="1"/>
        <end position="88"/>
    </location>
</feature>
<feature type="region of interest" description="Disordered" evidence="2">
    <location>
        <begin position="147"/>
        <end position="180"/>
    </location>
</feature>
<feature type="compositionally biased region" description="Basic and acidic residues" evidence="2">
    <location>
        <begin position="18"/>
        <end position="33"/>
    </location>
</feature>
<feature type="compositionally biased region" description="Basic and acidic residues" evidence="2">
    <location>
        <begin position="50"/>
        <end position="67"/>
    </location>
</feature>
<feature type="compositionally biased region" description="Basic and acidic residues" evidence="2">
    <location>
        <begin position="77"/>
        <end position="88"/>
    </location>
</feature>
<feature type="compositionally biased region" description="Basic and acidic residues" evidence="2">
    <location>
        <begin position="153"/>
        <end position="163"/>
    </location>
</feature>
<feature type="compositionally biased region" description="Acidic residues" evidence="2">
    <location>
        <begin position="164"/>
        <end position="173"/>
    </location>
</feature>
<accession>Q6LLQ8</accession>
<name>YIHI_PHOPR</name>
<proteinExistence type="inferred from homology"/>
<gene>
    <name evidence="1" type="primary">yihI</name>
    <name type="ordered locus">PBPRA3499</name>
</gene>
<evidence type="ECO:0000255" key="1">
    <source>
        <dbReference type="HAMAP-Rule" id="MF_01058"/>
    </source>
</evidence>
<evidence type="ECO:0000256" key="2">
    <source>
        <dbReference type="SAM" id="MobiDB-lite"/>
    </source>
</evidence>
<sequence>MTRKKRSRGVGSEGPAVFREKSTTQVDVEARKSQKDKKRKGLKSGNRNAEALDPKHYANGQKKDPRLGSKKPIPLVVEKKPTTKKERRLSAEQELDMLENDAQLMVLLDRIEAGEKLGAGLQKQVDQKLDRIEHLMGRLGLLEVEEPEVTEEAPVRKGAKTDEDLLDQFENMDLDSFGKE</sequence>
<keyword id="KW-0343">GTPase activation</keyword>
<keyword id="KW-1185">Reference proteome</keyword>
<keyword id="KW-0690">Ribosome biogenesis</keyword>
<reference key="1">
    <citation type="journal article" date="2005" name="Science">
        <title>Life at depth: Photobacterium profundum genome sequence and expression analysis.</title>
        <authorList>
            <person name="Vezzi A."/>
            <person name="Campanaro S."/>
            <person name="D'Angelo M."/>
            <person name="Simonato F."/>
            <person name="Vitulo N."/>
            <person name="Lauro F.M."/>
            <person name="Cestaro A."/>
            <person name="Malacrida G."/>
            <person name="Simionati B."/>
            <person name="Cannata N."/>
            <person name="Romualdi C."/>
            <person name="Bartlett D.H."/>
            <person name="Valle G."/>
        </authorList>
    </citation>
    <scope>NUCLEOTIDE SEQUENCE [LARGE SCALE GENOMIC DNA]</scope>
    <source>
        <strain>ATCC BAA-1253 / SS9</strain>
    </source>
</reference>
<organism>
    <name type="scientific">Photobacterium profundum (strain SS9)</name>
    <dbReference type="NCBI Taxonomy" id="298386"/>
    <lineage>
        <taxon>Bacteria</taxon>
        <taxon>Pseudomonadati</taxon>
        <taxon>Pseudomonadota</taxon>
        <taxon>Gammaproteobacteria</taxon>
        <taxon>Vibrionales</taxon>
        <taxon>Vibrionaceae</taxon>
        <taxon>Photobacterium</taxon>
    </lineage>
</organism>
<dbReference type="EMBL" id="CR378674">
    <property type="protein sequence ID" value="CAG21770.1"/>
    <property type="molecule type" value="Genomic_DNA"/>
</dbReference>
<dbReference type="RefSeq" id="WP_011220011.1">
    <property type="nucleotide sequence ID" value="NC_006370.1"/>
</dbReference>
<dbReference type="SMR" id="Q6LLQ8"/>
<dbReference type="STRING" id="298386.PBPRA3499"/>
<dbReference type="KEGG" id="ppr:PBPRA3499"/>
<dbReference type="eggNOG" id="COG3078">
    <property type="taxonomic scope" value="Bacteria"/>
</dbReference>
<dbReference type="HOGENOM" id="CLU_094104_1_0_6"/>
<dbReference type="Proteomes" id="UP000000593">
    <property type="component" value="Chromosome 1"/>
</dbReference>
<dbReference type="GO" id="GO:0005096">
    <property type="term" value="F:GTPase activator activity"/>
    <property type="evidence" value="ECO:0007669"/>
    <property type="project" value="UniProtKB-KW"/>
</dbReference>
<dbReference type="GO" id="GO:0042254">
    <property type="term" value="P:ribosome biogenesis"/>
    <property type="evidence" value="ECO:0007669"/>
    <property type="project" value="UniProtKB-KW"/>
</dbReference>
<dbReference type="HAMAP" id="MF_01058">
    <property type="entry name" value="GAP_YihI"/>
    <property type="match status" value="1"/>
</dbReference>
<dbReference type="InterPro" id="IPR007336">
    <property type="entry name" value="YihI"/>
</dbReference>
<dbReference type="NCBIfam" id="NF003560">
    <property type="entry name" value="PRK05244.1-1"/>
    <property type="match status" value="1"/>
</dbReference>
<dbReference type="Pfam" id="PF04220">
    <property type="entry name" value="YihI"/>
    <property type="match status" value="1"/>
</dbReference>
<protein>
    <recommendedName>
        <fullName evidence="1">Der GTPase-activating protein YihI</fullName>
    </recommendedName>
</protein>